<comment type="function">
    <text evidence="1">Catalyzes the conversion of uracil and 5-phospho-alpha-D-ribose 1-diphosphate (PRPP) to UMP and diphosphate.</text>
</comment>
<comment type="catalytic activity">
    <reaction evidence="1">
        <text>UMP + diphosphate = 5-phospho-alpha-D-ribose 1-diphosphate + uracil</text>
        <dbReference type="Rhea" id="RHEA:13017"/>
        <dbReference type="ChEBI" id="CHEBI:17568"/>
        <dbReference type="ChEBI" id="CHEBI:33019"/>
        <dbReference type="ChEBI" id="CHEBI:57865"/>
        <dbReference type="ChEBI" id="CHEBI:58017"/>
        <dbReference type="EC" id="2.4.2.9"/>
    </reaction>
</comment>
<comment type="cofactor">
    <cofactor evidence="1">
        <name>Mg(2+)</name>
        <dbReference type="ChEBI" id="CHEBI:18420"/>
    </cofactor>
    <text evidence="1">Binds 1 Mg(2+) ion per subunit. The magnesium is bound as Mg-PRPP.</text>
</comment>
<comment type="activity regulation">
    <text evidence="1">Allosterically activated by GTP.</text>
</comment>
<comment type="pathway">
    <text evidence="1">Pyrimidine metabolism; UMP biosynthesis via salvage pathway; UMP from uracil: step 1/1.</text>
</comment>
<comment type="similarity">
    <text evidence="1">Belongs to the UPRTase family.</text>
</comment>
<evidence type="ECO:0000255" key="1">
    <source>
        <dbReference type="HAMAP-Rule" id="MF_01218"/>
    </source>
</evidence>
<accession>Q5HTC1</accession>
<name>UPP_CAMJR</name>
<gene>
    <name evidence="1" type="primary">upp</name>
    <name type="ordered locus">CJE1478</name>
</gene>
<keyword id="KW-0021">Allosteric enzyme</keyword>
<keyword id="KW-0328">Glycosyltransferase</keyword>
<keyword id="KW-0342">GTP-binding</keyword>
<keyword id="KW-0460">Magnesium</keyword>
<keyword id="KW-0547">Nucleotide-binding</keyword>
<keyword id="KW-0808">Transferase</keyword>
<proteinExistence type="inferred from homology"/>
<organism>
    <name type="scientific">Campylobacter jejuni (strain RM1221)</name>
    <dbReference type="NCBI Taxonomy" id="195099"/>
    <lineage>
        <taxon>Bacteria</taxon>
        <taxon>Pseudomonadati</taxon>
        <taxon>Campylobacterota</taxon>
        <taxon>Epsilonproteobacteria</taxon>
        <taxon>Campylobacterales</taxon>
        <taxon>Campylobacteraceae</taxon>
        <taxon>Campylobacter</taxon>
    </lineage>
</organism>
<dbReference type="EC" id="2.4.2.9" evidence="1"/>
<dbReference type="EMBL" id="CP000025">
    <property type="protein sequence ID" value="AAW35919.1"/>
    <property type="molecule type" value="Genomic_DNA"/>
</dbReference>
<dbReference type="RefSeq" id="WP_002867334.1">
    <property type="nucleotide sequence ID" value="NC_003912.7"/>
</dbReference>
<dbReference type="SMR" id="Q5HTC1"/>
<dbReference type="KEGG" id="cjr:CJE1478"/>
<dbReference type="HOGENOM" id="CLU_067096_2_2_7"/>
<dbReference type="UniPathway" id="UPA00574">
    <property type="reaction ID" value="UER00636"/>
</dbReference>
<dbReference type="GO" id="GO:0005525">
    <property type="term" value="F:GTP binding"/>
    <property type="evidence" value="ECO:0007669"/>
    <property type="project" value="UniProtKB-KW"/>
</dbReference>
<dbReference type="GO" id="GO:0000287">
    <property type="term" value="F:magnesium ion binding"/>
    <property type="evidence" value="ECO:0007669"/>
    <property type="project" value="UniProtKB-UniRule"/>
</dbReference>
<dbReference type="GO" id="GO:0004845">
    <property type="term" value="F:uracil phosphoribosyltransferase activity"/>
    <property type="evidence" value="ECO:0007669"/>
    <property type="project" value="UniProtKB-UniRule"/>
</dbReference>
<dbReference type="GO" id="GO:0044206">
    <property type="term" value="P:UMP salvage"/>
    <property type="evidence" value="ECO:0007669"/>
    <property type="project" value="UniProtKB-UniRule"/>
</dbReference>
<dbReference type="GO" id="GO:0006223">
    <property type="term" value="P:uracil salvage"/>
    <property type="evidence" value="ECO:0007669"/>
    <property type="project" value="InterPro"/>
</dbReference>
<dbReference type="CDD" id="cd06223">
    <property type="entry name" value="PRTases_typeI"/>
    <property type="match status" value="1"/>
</dbReference>
<dbReference type="FunFam" id="3.40.50.2020:FF:000003">
    <property type="entry name" value="Uracil phosphoribosyltransferase"/>
    <property type="match status" value="1"/>
</dbReference>
<dbReference type="Gene3D" id="3.40.50.2020">
    <property type="match status" value="1"/>
</dbReference>
<dbReference type="HAMAP" id="MF_01218_B">
    <property type="entry name" value="Upp_B"/>
    <property type="match status" value="1"/>
</dbReference>
<dbReference type="InterPro" id="IPR000836">
    <property type="entry name" value="PRibTrfase_dom"/>
</dbReference>
<dbReference type="InterPro" id="IPR029057">
    <property type="entry name" value="PRTase-like"/>
</dbReference>
<dbReference type="InterPro" id="IPR034332">
    <property type="entry name" value="Upp_B"/>
</dbReference>
<dbReference type="InterPro" id="IPR050054">
    <property type="entry name" value="UPRTase/APRTase"/>
</dbReference>
<dbReference type="InterPro" id="IPR005765">
    <property type="entry name" value="Ura_phspho_trans"/>
</dbReference>
<dbReference type="NCBIfam" id="NF001097">
    <property type="entry name" value="PRK00129.1"/>
    <property type="match status" value="1"/>
</dbReference>
<dbReference type="NCBIfam" id="TIGR01091">
    <property type="entry name" value="upp"/>
    <property type="match status" value="1"/>
</dbReference>
<dbReference type="PANTHER" id="PTHR32315">
    <property type="entry name" value="ADENINE PHOSPHORIBOSYLTRANSFERASE"/>
    <property type="match status" value="1"/>
</dbReference>
<dbReference type="PANTHER" id="PTHR32315:SF4">
    <property type="entry name" value="URACIL PHOSPHORIBOSYLTRANSFERASE, CHLOROPLASTIC"/>
    <property type="match status" value="1"/>
</dbReference>
<dbReference type="Pfam" id="PF14681">
    <property type="entry name" value="UPRTase"/>
    <property type="match status" value="1"/>
</dbReference>
<dbReference type="SUPFAM" id="SSF53271">
    <property type="entry name" value="PRTase-like"/>
    <property type="match status" value="1"/>
</dbReference>
<feature type="chain" id="PRO_1000053698" description="Uracil phosphoribosyltransferase">
    <location>
        <begin position="1"/>
        <end position="208"/>
    </location>
</feature>
<feature type="binding site" evidence="1">
    <location>
        <position position="78"/>
    </location>
    <ligand>
        <name>5-phospho-alpha-D-ribose 1-diphosphate</name>
        <dbReference type="ChEBI" id="CHEBI:58017"/>
    </ligand>
</feature>
<feature type="binding site" evidence="1">
    <location>
        <position position="103"/>
    </location>
    <ligand>
        <name>5-phospho-alpha-D-ribose 1-diphosphate</name>
        <dbReference type="ChEBI" id="CHEBI:58017"/>
    </ligand>
</feature>
<feature type="binding site" evidence="1">
    <location>
        <begin position="130"/>
        <end position="138"/>
    </location>
    <ligand>
        <name>5-phospho-alpha-D-ribose 1-diphosphate</name>
        <dbReference type="ChEBI" id="CHEBI:58017"/>
    </ligand>
</feature>
<feature type="binding site" evidence="1">
    <location>
        <position position="193"/>
    </location>
    <ligand>
        <name>uracil</name>
        <dbReference type="ChEBI" id="CHEBI:17568"/>
    </ligand>
</feature>
<feature type="binding site" evidence="1">
    <location>
        <begin position="198"/>
        <end position="200"/>
    </location>
    <ligand>
        <name>uracil</name>
        <dbReference type="ChEBI" id="CHEBI:17568"/>
    </ligand>
</feature>
<feature type="binding site" evidence="1">
    <location>
        <position position="199"/>
    </location>
    <ligand>
        <name>5-phospho-alpha-D-ribose 1-diphosphate</name>
        <dbReference type="ChEBI" id="CHEBI:58017"/>
    </ligand>
</feature>
<sequence length="208" mass="23329">MKNIHCINHPLIEHKLGILRAKETKPFQFRMLIDEISSFLLFEASKDFSLKEIEISTLIQKTTVKKLDEKIMICPILRAALGMLESVFKMIPDASVGFLGFVRNEETLKADFYFQKLPKDAKKRTAIVIDPMFATGGTAIEACNFLKSQGVKKIKFISILAAPQGLKKFSQMHDDVEVFVACIDEGLNEKGYIIPGLGDAGDRVFNTL</sequence>
<reference key="1">
    <citation type="journal article" date="2005" name="PLoS Biol.">
        <title>Major structural differences and novel potential virulence mechanisms from the genomes of multiple Campylobacter species.</title>
        <authorList>
            <person name="Fouts D.E."/>
            <person name="Mongodin E.F."/>
            <person name="Mandrell R.E."/>
            <person name="Miller W.G."/>
            <person name="Rasko D.A."/>
            <person name="Ravel J."/>
            <person name="Brinkac L.M."/>
            <person name="DeBoy R.T."/>
            <person name="Parker C.T."/>
            <person name="Daugherty S.C."/>
            <person name="Dodson R.J."/>
            <person name="Durkin A.S."/>
            <person name="Madupu R."/>
            <person name="Sullivan S.A."/>
            <person name="Shetty J.U."/>
            <person name="Ayodeji M.A."/>
            <person name="Shvartsbeyn A."/>
            <person name="Schatz M.C."/>
            <person name="Badger J.H."/>
            <person name="Fraser C.M."/>
            <person name="Nelson K.E."/>
        </authorList>
    </citation>
    <scope>NUCLEOTIDE SEQUENCE [LARGE SCALE GENOMIC DNA]</scope>
    <source>
        <strain>RM1221</strain>
    </source>
</reference>
<protein>
    <recommendedName>
        <fullName evidence="1">Uracil phosphoribosyltransferase</fullName>
        <ecNumber evidence="1">2.4.2.9</ecNumber>
    </recommendedName>
    <alternativeName>
        <fullName evidence="1">UMP pyrophosphorylase</fullName>
    </alternativeName>
    <alternativeName>
        <fullName evidence="1">UPRTase</fullName>
    </alternativeName>
</protein>